<gene>
    <name type="primary">MT-CO2</name>
    <name type="synonym">COII</name>
    <name type="synonym">COXII</name>
    <name type="synonym">MTCO2</name>
</gene>
<feature type="chain" id="PRO_0000183682" description="Cytochrome c oxidase subunit 2">
    <location>
        <begin position="1"/>
        <end position="227"/>
    </location>
</feature>
<feature type="topological domain" description="Mitochondrial intermembrane" evidence="4">
    <location>
        <begin position="1"/>
        <end position="14"/>
    </location>
</feature>
<feature type="transmembrane region" description="Helical; Name=I" evidence="4">
    <location>
        <begin position="15"/>
        <end position="45"/>
    </location>
</feature>
<feature type="topological domain" description="Mitochondrial matrix" evidence="4">
    <location>
        <begin position="46"/>
        <end position="59"/>
    </location>
</feature>
<feature type="transmembrane region" description="Helical; Name=II" evidence="4">
    <location>
        <begin position="60"/>
        <end position="87"/>
    </location>
</feature>
<feature type="topological domain" description="Mitochondrial intermembrane" evidence="4">
    <location>
        <begin position="88"/>
        <end position="227"/>
    </location>
</feature>
<feature type="binding site" evidence="4">
    <location>
        <position position="161"/>
    </location>
    <ligand>
        <name>Cu cation</name>
        <dbReference type="ChEBI" id="CHEBI:23378"/>
        <label>A1</label>
    </ligand>
</feature>
<feature type="binding site" evidence="4">
    <location>
        <position position="196"/>
    </location>
    <ligand>
        <name>Cu cation</name>
        <dbReference type="ChEBI" id="CHEBI:23378"/>
        <label>A1</label>
    </ligand>
</feature>
<feature type="binding site" evidence="4">
    <location>
        <position position="196"/>
    </location>
    <ligand>
        <name>Cu cation</name>
        <dbReference type="ChEBI" id="CHEBI:23378"/>
        <label>A2</label>
    </ligand>
</feature>
<feature type="binding site" evidence="4">
    <location>
        <position position="198"/>
    </location>
    <ligand>
        <name>Cu cation</name>
        <dbReference type="ChEBI" id="CHEBI:23378"/>
        <label>A2</label>
    </ligand>
</feature>
<feature type="binding site" evidence="4">
    <location>
        <position position="198"/>
    </location>
    <ligand>
        <name>Mg(2+)</name>
        <dbReference type="ChEBI" id="CHEBI:18420"/>
        <note>ligand shared with MT-CO1</note>
    </ligand>
</feature>
<feature type="binding site" evidence="4">
    <location>
        <position position="200"/>
    </location>
    <ligand>
        <name>Cu cation</name>
        <dbReference type="ChEBI" id="CHEBI:23378"/>
        <label>A1</label>
    </ligand>
</feature>
<feature type="binding site" evidence="4">
    <location>
        <position position="200"/>
    </location>
    <ligand>
        <name>Cu cation</name>
        <dbReference type="ChEBI" id="CHEBI:23378"/>
        <label>A2</label>
    </ligand>
</feature>
<feature type="binding site" evidence="4">
    <location>
        <position position="204"/>
    </location>
    <ligand>
        <name>Cu cation</name>
        <dbReference type="ChEBI" id="CHEBI:23378"/>
        <label>A2</label>
    </ligand>
</feature>
<feature type="binding site" evidence="4">
    <location>
        <position position="207"/>
    </location>
    <ligand>
        <name>Cu cation</name>
        <dbReference type="ChEBI" id="CHEBI:23378"/>
        <label>A1</label>
    </ligand>
</feature>
<feature type="modified residue" description="Phosphotyrosine" evidence="2">
    <location>
        <position position="218"/>
    </location>
</feature>
<evidence type="ECO:0000250" key="1">
    <source>
        <dbReference type="UniProtKB" id="P00403"/>
    </source>
</evidence>
<evidence type="ECO:0000250" key="2">
    <source>
        <dbReference type="UniProtKB" id="P00406"/>
    </source>
</evidence>
<evidence type="ECO:0000250" key="3">
    <source>
        <dbReference type="UniProtKB" id="P00410"/>
    </source>
</evidence>
<evidence type="ECO:0000250" key="4">
    <source>
        <dbReference type="UniProtKB" id="P68530"/>
    </source>
</evidence>
<evidence type="ECO:0000305" key="5"/>
<keyword id="KW-0186">Copper</keyword>
<keyword id="KW-0249">Electron transport</keyword>
<keyword id="KW-0460">Magnesium</keyword>
<keyword id="KW-0472">Membrane</keyword>
<keyword id="KW-0479">Metal-binding</keyword>
<keyword id="KW-0496">Mitochondrion</keyword>
<keyword id="KW-0999">Mitochondrion inner membrane</keyword>
<keyword id="KW-0597">Phosphoprotein</keyword>
<keyword id="KW-0679">Respiratory chain</keyword>
<keyword id="KW-1278">Translocase</keyword>
<keyword id="KW-0812">Transmembrane</keyword>
<keyword id="KW-1133">Transmembrane helix</keyword>
<keyword id="KW-0813">Transport</keyword>
<comment type="function">
    <text evidence="3">Component of the cytochrome c oxidase, the last enzyme in the mitochondrial electron transport chain which drives oxidative phosphorylation. The respiratory chain contains 3 multisubunit complexes succinate dehydrogenase (complex II, CII), ubiquinol-cytochrome c oxidoreductase (cytochrome b-c1 complex, complex III, CIII) and cytochrome c oxidase (complex IV, CIV), that cooperate to transfer electrons derived from NADH and succinate to molecular oxygen, creating an electrochemical gradient over the inner membrane that drives transmembrane transport and the ATP synthase. Cytochrome c oxidase is the component of the respiratory chain that catalyzes the reduction of oxygen to water. Electrons originating from reduced cytochrome c in the intermembrane space (IMS) are transferred via the dinuclear copper A center (CU(A)) of subunit 2 and heme A of subunit 1 to the active site in subunit 1, a binuclear center (BNC) formed by heme A3 and copper B (CU(B)). The BNC reduces molecular oxygen to 2 water molecules using 4 electrons from cytochrome c in the IMS and 4 protons from the mitochondrial matrix.</text>
</comment>
<comment type="catalytic activity">
    <reaction evidence="3">
        <text>4 Fe(II)-[cytochrome c] + O2 + 8 H(+)(in) = 4 Fe(III)-[cytochrome c] + 2 H2O + 4 H(+)(out)</text>
        <dbReference type="Rhea" id="RHEA:11436"/>
        <dbReference type="Rhea" id="RHEA-COMP:10350"/>
        <dbReference type="Rhea" id="RHEA-COMP:14399"/>
        <dbReference type="ChEBI" id="CHEBI:15377"/>
        <dbReference type="ChEBI" id="CHEBI:15378"/>
        <dbReference type="ChEBI" id="CHEBI:15379"/>
        <dbReference type="ChEBI" id="CHEBI:29033"/>
        <dbReference type="ChEBI" id="CHEBI:29034"/>
        <dbReference type="EC" id="7.1.1.9"/>
    </reaction>
    <physiologicalReaction direction="left-to-right" evidence="3">
        <dbReference type="Rhea" id="RHEA:11437"/>
    </physiologicalReaction>
</comment>
<comment type="cofactor">
    <cofactor evidence="4">
        <name>Cu cation</name>
        <dbReference type="ChEBI" id="CHEBI:23378"/>
    </cofactor>
    <text evidence="4">Binds a dinuclear copper A center per subunit.</text>
</comment>
<comment type="subunit">
    <text evidence="1 4">Component of the cytochrome c oxidase (complex IV, CIV), a multisubunit enzyme composed of 14 subunits. The complex is composed of a catalytic core of 3 subunits MT-CO1, MT-CO2 and MT-CO3, encoded in the mitochondrial DNA, and 11 supernumerary subunits COX4I, COX5A, COX5B, COX6A, COX6B, COX6C, COX7A, COX7B, COX7C, COX8 and NDUFA4, which are encoded in the nuclear genome. The complex exists as a monomer or a dimer and forms supercomplexes (SCs) in the inner mitochondrial membrane with NADH-ubiquinone oxidoreductase (complex I, CI) and ubiquinol-cytochrome c oxidoreductase (cytochrome b-c1 complex, complex III, CIII), resulting in different assemblies (supercomplex SCI(1)III(2)IV(1) and megacomplex MCI(2)III(2)IV(2)) (By similarity). Found in a complex with TMEM177, COA6, COX18, COX20, SCO1 and SCO2. Interacts with TMEM177 in a COX20-dependent manner. Interacts with COX20. Interacts with COX16 (By similarity).</text>
</comment>
<comment type="subcellular location">
    <subcellularLocation>
        <location evidence="4">Mitochondrion inner membrane</location>
        <topology evidence="4">Multi-pass membrane protein</topology>
    </subcellularLocation>
</comment>
<comment type="similarity">
    <text evidence="5">Belongs to the cytochrome c oxidase subunit 2 family.</text>
</comment>
<geneLocation type="mitochondrion"/>
<protein>
    <recommendedName>
        <fullName>Cytochrome c oxidase subunit 2</fullName>
        <ecNumber>7.1.1.9</ecNumber>
    </recommendedName>
    <alternativeName>
        <fullName>Cytochrome c oxidase polypeptide II</fullName>
    </alternativeName>
</protein>
<sequence>MAYPFQLGFQDATSPIMEELLHFHDHALMIVFLISSLVLYLISVMLTTSLTHTSTMDAQEVETIWTILPAMILIMIALPSLRILYMMDEINNPYLTVKTMGHQWYWSYEYTDYEDMSFDSYMVPTQDLKPGELRLLEVDNRVVLPMELTIRMLISSEDVLHSWAVPSLGLKTDAIPGRLNQTTLLSTRPGLYYGQCSEICGSNHSFMPIVLELVPLKYFEKWSSSML</sequence>
<proteinExistence type="inferred from homology"/>
<reference key="1">
    <citation type="journal article" date="1991" name="Proc. Natl. Acad. Sci. U.S.A.">
        <title>Molecular phylogeny of the superorder Archonta.</title>
        <authorList>
            <person name="Adkins R.M."/>
            <person name="Honeycutt R.L."/>
        </authorList>
    </citation>
    <scope>NUCLEOTIDE SEQUENCE [GENOMIC DNA]</scope>
</reference>
<dbReference type="EC" id="7.1.1.9"/>
<dbReference type="EMBL" id="M80908">
    <property type="protein sequence ID" value="AAA65042.1"/>
    <property type="molecule type" value="Genomic_DNA"/>
</dbReference>
<dbReference type="SMR" id="Q37649"/>
<dbReference type="GO" id="GO:0005743">
    <property type="term" value="C:mitochondrial inner membrane"/>
    <property type="evidence" value="ECO:0007669"/>
    <property type="project" value="UniProtKB-SubCell"/>
</dbReference>
<dbReference type="GO" id="GO:0045277">
    <property type="term" value="C:respiratory chain complex IV"/>
    <property type="evidence" value="ECO:0000250"/>
    <property type="project" value="UniProtKB"/>
</dbReference>
<dbReference type="GO" id="GO:0005507">
    <property type="term" value="F:copper ion binding"/>
    <property type="evidence" value="ECO:0007669"/>
    <property type="project" value="InterPro"/>
</dbReference>
<dbReference type="GO" id="GO:0004129">
    <property type="term" value="F:cytochrome-c oxidase activity"/>
    <property type="evidence" value="ECO:0007669"/>
    <property type="project" value="UniProtKB-EC"/>
</dbReference>
<dbReference type="GO" id="GO:0042773">
    <property type="term" value="P:ATP synthesis coupled electron transport"/>
    <property type="evidence" value="ECO:0007669"/>
    <property type="project" value="TreeGrafter"/>
</dbReference>
<dbReference type="CDD" id="cd13912">
    <property type="entry name" value="CcO_II_C"/>
    <property type="match status" value="1"/>
</dbReference>
<dbReference type="FunFam" id="1.10.287.90:FF:000001">
    <property type="entry name" value="Cytochrome c oxidase subunit 2"/>
    <property type="match status" value="1"/>
</dbReference>
<dbReference type="FunFam" id="2.60.40.420:FF:000001">
    <property type="entry name" value="Cytochrome c oxidase subunit 2"/>
    <property type="match status" value="1"/>
</dbReference>
<dbReference type="Gene3D" id="1.10.287.90">
    <property type="match status" value="1"/>
</dbReference>
<dbReference type="Gene3D" id="2.60.40.420">
    <property type="entry name" value="Cupredoxins - blue copper proteins"/>
    <property type="match status" value="1"/>
</dbReference>
<dbReference type="InterPro" id="IPR045187">
    <property type="entry name" value="CcO_II"/>
</dbReference>
<dbReference type="InterPro" id="IPR002429">
    <property type="entry name" value="CcO_II-like_C"/>
</dbReference>
<dbReference type="InterPro" id="IPR034210">
    <property type="entry name" value="CcO_II_C"/>
</dbReference>
<dbReference type="InterPro" id="IPR001505">
    <property type="entry name" value="Copper_CuA"/>
</dbReference>
<dbReference type="InterPro" id="IPR008972">
    <property type="entry name" value="Cupredoxin"/>
</dbReference>
<dbReference type="InterPro" id="IPR014222">
    <property type="entry name" value="Cyt_c_oxidase_su2"/>
</dbReference>
<dbReference type="InterPro" id="IPR011759">
    <property type="entry name" value="Cyt_c_oxidase_su2_TM_dom"/>
</dbReference>
<dbReference type="InterPro" id="IPR036257">
    <property type="entry name" value="Cyt_c_oxidase_su2_TM_sf"/>
</dbReference>
<dbReference type="NCBIfam" id="TIGR02866">
    <property type="entry name" value="CoxB"/>
    <property type="match status" value="1"/>
</dbReference>
<dbReference type="PANTHER" id="PTHR22888:SF9">
    <property type="entry name" value="CYTOCHROME C OXIDASE SUBUNIT 2"/>
    <property type="match status" value="1"/>
</dbReference>
<dbReference type="PANTHER" id="PTHR22888">
    <property type="entry name" value="CYTOCHROME C OXIDASE, SUBUNIT II"/>
    <property type="match status" value="1"/>
</dbReference>
<dbReference type="Pfam" id="PF00116">
    <property type="entry name" value="COX2"/>
    <property type="match status" value="1"/>
</dbReference>
<dbReference type="Pfam" id="PF02790">
    <property type="entry name" value="COX2_TM"/>
    <property type="match status" value="1"/>
</dbReference>
<dbReference type="PRINTS" id="PR01166">
    <property type="entry name" value="CYCOXIDASEII"/>
</dbReference>
<dbReference type="SUPFAM" id="SSF49503">
    <property type="entry name" value="Cupredoxins"/>
    <property type="match status" value="1"/>
</dbReference>
<dbReference type="SUPFAM" id="SSF81464">
    <property type="entry name" value="Cytochrome c oxidase subunit II-like, transmembrane region"/>
    <property type="match status" value="1"/>
</dbReference>
<dbReference type="PROSITE" id="PS00078">
    <property type="entry name" value="COX2"/>
    <property type="match status" value="1"/>
</dbReference>
<dbReference type="PROSITE" id="PS50857">
    <property type="entry name" value="COX2_CUA"/>
    <property type="match status" value="1"/>
</dbReference>
<dbReference type="PROSITE" id="PS50999">
    <property type="entry name" value="COX2_TM"/>
    <property type="match status" value="1"/>
</dbReference>
<name>COX2_ROULE</name>
<organism>
    <name type="scientific">Rousettus leschenaultii</name>
    <name type="common">Leschenault's rousette</name>
    <name type="synonym">Pteropus leschenaultii</name>
    <dbReference type="NCBI Taxonomy" id="9408"/>
    <lineage>
        <taxon>Eukaryota</taxon>
        <taxon>Metazoa</taxon>
        <taxon>Chordata</taxon>
        <taxon>Craniata</taxon>
        <taxon>Vertebrata</taxon>
        <taxon>Euteleostomi</taxon>
        <taxon>Mammalia</taxon>
        <taxon>Eutheria</taxon>
        <taxon>Laurasiatheria</taxon>
        <taxon>Chiroptera</taxon>
        <taxon>Yinpterochiroptera</taxon>
        <taxon>Pteropodoidea</taxon>
        <taxon>Pteropodidae</taxon>
        <taxon>Rousettinae</taxon>
        <taxon>Rousettus</taxon>
    </lineage>
</organism>
<accession>Q37649</accession>